<protein>
    <recommendedName>
        <fullName evidence="1">Small ribosomal subunit protein uS8</fullName>
    </recommendedName>
    <alternativeName>
        <fullName evidence="2">30S ribosomal protein S8</fullName>
    </alternativeName>
</protein>
<dbReference type="EMBL" id="CP000736">
    <property type="protein sequence ID" value="ABR53129.1"/>
    <property type="molecule type" value="Genomic_DNA"/>
</dbReference>
<dbReference type="SMR" id="A6U3W1"/>
<dbReference type="KEGG" id="sah:SaurJH1_2304"/>
<dbReference type="HOGENOM" id="CLU_098428_0_2_9"/>
<dbReference type="GO" id="GO:1990904">
    <property type="term" value="C:ribonucleoprotein complex"/>
    <property type="evidence" value="ECO:0007669"/>
    <property type="project" value="UniProtKB-KW"/>
</dbReference>
<dbReference type="GO" id="GO:0005840">
    <property type="term" value="C:ribosome"/>
    <property type="evidence" value="ECO:0007669"/>
    <property type="project" value="UniProtKB-KW"/>
</dbReference>
<dbReference type="GO" id="GO:0019843">
    <property type="term" value="F:rRNA binding"/>
    <property type="evidence" value="ECO:0007669"/>
    <property type="project" value="UniProtKB-UniRule"/>
</dbReference>
<dbReference type="GO" id="GO:0003735">
    <property type="term" value="F:structural constituent of ribosome"/>
    <property type="evidence" value="ECO:0007669"/>
    <property type="project" value="InterPro"/>
</dbReference>
<dbReference type="GO" id="GO:0006412">
    <property type="term" value="P:translation"/>
    <property type="evidence" value="ECO:0007669"/>
    <property type="project" value="UniProtKB-UniRule"/>
</dbReference>
<dbReference type="FunFam" id="3.30.1370.30:FF:000002">
    <property type="entry name" value="30S ribosomal protein S8"/>
    <property type="match status" value="1"/>
</dbReference>
<dbReference type="FunFam" id="3.30.1490.10:FF:000001">
    <property type="entry name" value="30S ribosomal protein S8"/>
    <property type="match status" value="1"/>
</dbReference>
<dbReference type="Gene3D" id="3.30.1370.30">
    <property type="match status" value="1"/>
</dbReference>
<dbReference type="Gene3D" id="3.30.1490.10">
    <property type="match status" value="1"/>
</dbReference>
<dbReference type="HAMAP" id="MF_01302_B">
    <property type="entry name" value="Ribosomal_uS8_B"/>
    <property type="match status" value="1"/>
</dbReference>
<dbReference type="InterPro" id="IPR000630">
    <property type="entry name" value="Ribosomal_uS8"/>
</dbReference>
<dbReference type="InterPro" id="IPR047863">
    <property type="entry name" value="Ribosomal_uS8_CS"/>
</dbReference>
<dbReference type="InterPro" id="IPR035987">
    <property type="entry name" value="Ribosomal_uS8_sf"/>
</dbReference>
<dbReference type="NCBIfam" id="NF001109">
    <property type="entry name" value="PRK00136.1"/>
    <property type="match status" value="1"/>
</dbReference>
<dbReference type="PANTHER" id="PTHR11758">
    <property type="entry name" value="40S RIBOSOMAL PROTEIN S15A"/>
    <property type="match status" value="1"/>
</dbReference>
<dbReference type="Pfam" id="PF00410">
    <property type="entry name" value="Ribosomal_S8"/>
    <property type="match status" value="1"/>
</dbReference>
<dbReference type="SUPFAM" id="SSF56047">
    <property type="entry name" value="Ribosomal protein S8"/>
    <property type="match status" value="1"/>
</dbReference>
<dbReference type="PROSITE" id="PS00053">
    <property type="entry name" value="RIBOSOMAL_S8"/>
    <property type="match status" value="1"/>
</dbReference>
<organism>
    <name type="scientific">Staphylococcus aureus (strain JH1)</name>
    <dbReference type="NCBI Taxonomy" id="359787"/>
    <lineage>
        <taxon>Bacteria</taxon>
        <taxon>Bacillati</taxon>
        <taxon>Bacillota</taxon>
        <taxon>Bacilli</taxon>
        <taxon>Bacillales</taxon>
        <taxon>Staphylococcaceae</taxon>
        <taxon>Staphylococcus</taxon>
    </lineage>
</organism>
<reference key="1">
    <citation type="submission" date="2007-06" db="EMBL/GenBank/DDBJ databases">
        <title>Complete sequence of chromosome of Staphylococcus aureus subsp. aureus JH1.</title>
        <authorList>
            <consortium name="US DOE Joint Genome Institute"/>
            <person name="Copeland A."/>
            <person name="Lucas S."/>
            <person name="Lapidus A."/>
            <person name="Barry K."/>
            <person name="Detter J.C."/>
            <person name="Glavina del Rio T."/>
            <person name="Hammon N."/>
            <person name="Israni S."/>
            <person name="Dalin E."/>
            <person name="Tice H."/>
            <person name="Pitluck S."/>
            <person name="Chain P."/>
            <person name="Malfatti S."/>
            <person name="Shin M."/>
            <person name="Vergez L."/>
            <person name="Schmutz J."/>
            <person name="Larimer F."/>
            <person name="Land M."/>
            <person name="Hauser L."/>
            <person name="Kyrpides N."/>
            <person name="Ivanova N."/>
            <person name="Tomasz A."/>
            <person name="Richardson P."/>
        </authorList>
    </citation>
    <scope>NUCLEOTIDE SEQUENCE [LARGE SCALE GENOMIC DNA]</scope>
    <source>
        <strain>JH1</strain>
    </source>
</reference>
<evidence type="ECO:0000255" key="1">
    <source>
        <dbReference type="HAMAP-Rule" id="MF_01302"/>
    </source>
</evidence>
<evidence type="ECO:0000305" key="2"/>
<proteinExistence type="inferred from homology"/>
<gene>
    <name evidence="1" type="primary">rpsH</name>
    <name type="ordered locus">SaurJH1_2304</name>
</gene>
<accession>A6U3W1</accession>
<comment type="function">
    <text evidence="1">One of the primary rRNA binding proteins, it binds directly to 16S rRNA central domain where it helps coordinate assembly of the platform of the 30S subunit.</text>
</comment>
<comment type="subunit">
    <text evidence="1">Part of the 30S ribosomal subunit. Contacts proteins S5 and S12.</text>
</comment>
<comment type="similarity">
    <text evidence="1">Belongs to the universal ribosomal protein uS8 family.</text>
</comment>
<feature type="chain" id="PRO_1000085948" description="Small ribosomal subunit protein uS8">
    <location>
        <begin position="1"/>
        <end position="132"/>
    </location>
</feature>
<keyword id="KW-0687">Ribonucleoprotein</keyword>
<keyword id="KW-0689">Ribosomal protein</keyword>
<keyword id="KW-0694">RNA-binding</keyword>
<keyword id="KW-0699">rRNA-binding</keyword>
<name>RS8_STAA2</name>
<sequence>MTMTDPIADMLTRVRNANMVRHEKLELPASNIKKEIAEILKSEGFIKNVEYVEDDKQGVLRLFLKYGQNDERVITGLKRISKPGLRVYAKASEMPKVLNGLGIALVSTSEGVITDKEARKRNVGGEIIAYVW</sequence>